<organism>
    <name type="scientific">Mycetohabitans rhizoxinica (strain DSM 19002 / CIP 109453 / HKI 454)</name>
    <name type="common">Paraburkholderia rhizoxinica</name>
    <dbReference type="NCBI Taxonomy" id="882378"/>
    <lineage>
        <taxon>Bacteria</taxon>
        <taxon>Pseudomonadati</taxon>
        <taxon>Pseudomonadota</taxon>
        <taxon>Betaproteobacteria</taxon>
        <taxon>Burkholderiales</taxon>
        <taxon>Burkholderiaceae</taxon>
        <taxon>Mycetohabitans</taxon>
    </lineage>
</organism>
<dbReference type="EMBL" id="FR687361">
    <property type="protein sequence ID" value="CBW77345.1"/>
    <property type="molecule type" value="Genomic_DNA"/>
</dbReference>
<dbReference type="SMR" id="E5AW43"/>
<dbReference type="KEGG" id="brh:RBRH_01777"/>
<dbReference type="HOGENOM" id="CLU_893338_0_0_4"/>
<dbReference type="OrthoDB" id="6008802at2"/>
<dbReference type="Proteomes" id="UP000007437">
    <property type="component" value="Plasmid pBRH02"/>
</dbReference>
<dbReference type="Gene3D" id="6.10.140.500">
    <property type="match status" value="4"/>
</dbReference>
<dbReference type="InterPro" id="IPR036770">
    <property type="entry name" value="Ankyrin_rpt-contain_sf"/>
</dbReference>
<dbReference type="SUPFAM" id="SSF48403">
    <property type="entry name" value="Ankyrin repeat"/>
    <property type="match status" value="1"/>
</dbReference>
<dbReference type="PROSITE" id="PS50297">
    <property type="entry name" value="ANK_REP_REGION"/>
    <property type="match status" value="1"/>
</dbReference>
<geneLocation type="plasmid">
    <name>pBRH02</name>
</geneLocation>
<sequence length="311" mass="32349">MPVTSVYQKDKPFGARLNLSPFECLKIEKHSGGADALEFISNKYDALTQVLSRADILKIACHDCAAHALQAVLDYEQVFRQRGFARADIIKITGNGGGAQALKAVVVHGPTLNECGFSQADIVRIADNIGGAQALKAVLEHGPTLNERDYSGADIVKIAGNGGGARALKAVVMHGPTLCESGYSGADIVKIASNGGGAQALEAVAMHGSTLCERGYCRTDIAKIAGNGGGAQALKAIVMHGPTLCERGYSRTDIVKIADNNGGAQALKAVFEHGPALTQAGRSNEDIVNMAARTGAAGQIRKMAAQLSGRQ</sequence>
<protein>
    <recommendedName>
        <fullName evidence="3">Burkholderia TALE-like protein 3</fullName>
    </recommendedName>
    <alternativeName>
        <fullName evidence="2">Modular DNA-binding domain protein BurrH3</fullName>
    </alternativeName>
</protein>
<accession>E5AW43</accession>
<comment type="function">
    <text evidence="1">Does not bind DNA, probably because it has too few core repeats.</text>
</comment>
<comment type="similarity">
    <text evidence="3">Belongs to the transcription activator-like effector (TALE) family. Bat subfamily.</text>
</comment>
<proteinExistence type="inferred from homology"/>
<evidence type="ECO:0000269" key="1">
    <source>
    </source>
</evidence>
<evidence type="ECO:0000303" key="2">
    <source>
    </source>
</evidence>
<evidence type="ECO:0000303" key="3">
    <source>
    </source>
</evidence>
<gene>
    <name evidence="3" type="primary">bat3</name>
    <name type="ordered locus">RBRH_01777</name>
</gene>
<keyword id="KW-0614">Plasmid</keyword>
<keyword id="KW-0677">Repeat</keyword>
<name>BAT3_MYCRK</name>
<reference key="1">
    <citation type="journal article" date="2011" name="J. Bacteriol.">
        <title>Complete genome sequence of Burkholderia rhizoxinica, an endosymbiont of Rhizopus microsporus.</title>
        <authorList>
            <person name="Lackner G."/>
            <person name="Moebius N."/>
            <person name="Partida-Martinez L."/>
            <person name="Hertweck C."/>
        </authorList>
    </citation>
    <scope>NUCLEOTIDE SEQUENCE [LARGE SCALE GENOMIC DNA]</scope>
    <source>
        <strain>DSM 19002 / CIP 109453 / HKI 454</strain>
        <plasmid>pBRH02</plasmid>
    </source>
</reference>
<reference key="2">
    <citation type="journal article" date="2014" name="Nucleic Acids Res.">
        <title>Programmable DNA-binding proteins from Burkholderia provide a fresh perspective on the TALE-like repeat domain.</title>
        <authorList>
            <person name="de Lange O."/>
            <person name="Wolf C."/>
            <person name="Dietze J."/>
            <person name="Elsaesser J."/>
            <person name="Morbitzer R."/>
            <person name="Lahaye T."/>
        </authorList>
    </citation>
    <scope>FUNCTION</scope>
    <scope>REPEAT</scope>
    <source>
        <strain>DSM 19002 / CIP 109453 / HKI 454</strain>
    </source>
</reference>
<reference key="3">
    <citation type="journal article" date="2014" name="Sci. Rep.">
        <title>BurrH: a new modular DNA binding protein for genome engineering.</title>
        <authorList>
            <person name="Juillerat A."/>
            <person name="Bertonati C."/>
            <person name="Dubois G."/>
            <person name="Guyot V."/>
            <person name="Thomas S."/>
            <person name="Valton J."/>
            <person name="Beurdeley M."/>
            <person name="Silva G.H."/>
            <person name="Daboussi F."/>
            <person name="Duchateau P."/>
        </authorList>
    </citation>
    <scope>DOMAIN</scope>
    <scope>REPEAT</scope>
</reference>
<feature type="chain" id="PRO_0000430625" description="Burkholderia TALE-like protein 3">
    <location>
        <begin position="1"/>
        <end position="311"/>
    </location>
</feature>
<feature type="repeat" description="Cryptic repeat -1" evidence="2 3">
    <location>
        <begin position="19"/>
        <end position="50"/>
    </location>
</feature>
<feature type="repeat" description="Cryptic repeat 0" evidence="2 3">
    <location>
        <begin position="51"/>
        <end position="83"/>
    </location>
</feature>
<feature type="repeat" description="Core repeat 1" evidence="2 3">
    <location>
        <begin position="84"/>
        <end position="116"/>
    </location>
</feature>
<feature type="repeat" description="Core repeat 2" evidence="2 3">
    <location>
        <begin position="117"/>
        <end position="149"/>
    </location>
</feature>
<feature type="repeat" description="Core repeat 3" evidence="2 3">
    <location>
        <begin position="150"/>
        <end position="182"/>
    </location>
</feature>
<feature type="repeat" description="Core repeat 4" evidence="2 3">
    <location>
        <begin position="183"/>
        <end position="215"/>
    </location>
</feature>
<feature type="repeat" description="Core repeat 5" evidence="2 3">
    <location>
        <begin position="216"/>
        <end position="248"/>
    </location>
</feature>
<feature type="repeat" description="Core repeat 6" evidence="2 3">
    <location>
        <begin position="249"/>
        <end position="281"/>
    </location>
</feature>
<feature type="repeat" description="Cryptic repeat +1" evidence="3">
    <location>
        <begin position="282"/>
        <end position="311"/>
    </location>
</feature>